<feature type="chain" id="PRO_1000142609" description="Large ribosomal subunit protein uL18">
    <location>
        <begin position="1"/>
        <end position="117"/>
    </location>
</feature>
<evidence type="ECO:0000255" key="1">
    <source>
        <dbReference type="HAMAP-Rule" id="MF_01337"/>
    </source>
</evidence>
<evidence type="ECO:0000305" key="2"/>
<keyword id="KW-1185">Reference proteome</keyword>
<keyword id="KW-0687">Ribonucleoprotein</keyword>
<keyword id="KW-0689">Ribosomal protein</keyword>
<keyword id="KW-0694">RNA-binding</keyword>
<keyword id="KW-0699">rRNA-binding</keyword>
<organism>
    <name type="scientific">Acidithiobacillus ferrooxidans (strain ATCC 23270 / DSM 14882 / CIP 104768 / NCIMB 8455)</name>
    <name type="common">Ferrobacillus ferrooxidans (strain ATCC 23270)</name>
    <dbReference type="NCBI Taxonomy" id="243159"/>
    <lineage>
        <taxon>Bacteria</taxon>
        <taxon>Pseudomonadati</taxon>
        <taxon>Pseudomonadota</taxon>
        <taxon>Acidithiobacillia</taxon>
        <taxon>Acidithiobacillales</taxon>
        <taxon>Acidithiobacillaceae</taxon>
        <taxon>Acidithiobacillus</taxon>
    </lineage>
</organism>
<comment type="function">
    <text evidence="1">This is one of the proteins that bind and probably mediate the attachment of the 5S RNA into the large ribosomal subunit, where it forms part of the central protuberance.</text>
</comment>
<comment type="subunit">
    <text evidence="1">Part of the 50S ribosomal subunit; part of the 5S rRNA/L5/L18/L25 subcomplex. Contacts the 5S and 23S rRNAs.</text>
</comment>
<comment type="similarity">
    <text evidence="1">Belongs to the universal ribosomal protein uL18 family.</text>
</comment>
<reference key="1">
    <citation type="journal article" date="2008" name="BMC Genomics">
        <title>Acidithiobacillus ferrooxidans metabolism: from genome sequence to industrial applications.</title>
        <authorList>
            <person name="Valdes J."/>
            <person name="Pedroso I."/>
            <person name="Quatrini R."/>
            <person name="Dodson R.J."/>
            <person name="Tettelin H."/>
            <person name="Blake R. II"/>
            <person name="Eisen J.A."/>
            <person name="Holmes D.S."/>
        </authorList>
    </citation>
    <scope>NUCLEOTIDE SEQUENCE [LARGE SCALE GENOMIC DNA]</scope>
    <source>
        <strain>ATCC 23270 / DSM 14882 / CIP 104768 / NCIMB 8455</strain>
    </source>
</reference>
<proteinExistence type="inferred from homology"/>
<protein>
    <recommendedName>
        <fullName evidence="1">Large ribosomal subunit protein uL18</fullName>
    </recommendedName>
    <alternativeName>
        <fullName evidence="2">50S ribosomal protein L18</fullName>
    </alternativeName>
</protein>
<gene>
    <name evidence="1" type="primary">rplR</name>
    <name type="ordered locus">AFE_0343</name>
</gene>
<accession>B7J483</accession>
<sequence>MNKNLARLRRARKTRARIASQAKPRLCVFRSGRHIYAQVIDDSQGKVLAQASTVEGELRASMGRGADVAAAATIGQRVAAKALAVGVKEVAFDRSGYRYHGRVRALADAAREGGLSF</sequence>
<name>RL18_ACIF2</name>
<dbReference type="EMBL" id="CP001219">
    <property type="protein sequence ID" value="ACK80360.1"/>
    <property type="molecule type" value="Genomic_DNA"/>
</dbReference>
<dbReference type="RefSeq" id="WP_009569276.1">
    <property type="nucleotide sequence ID" value="NC_011761.1"/>
</dbReference>
<dbReference type="SMR" id="B7J483"/>
<dbReference type="STRING" id="243159.AFE_0343"/>
<dbReference type="PaxDb" id="243159-AFE_0343"/>
<dbReference type="GeneID" id="65279721"/>
<dbReference type="KEGG" id="afr:AFE_0343"/>
<dbReference type="eggNOG" id="COG0256">
    <property type="taxonomic scope" value="Bacteria"/>
</dbReference>
<dbReference type="HOGENOM" id="CLU_098841_0_1_6"/>
<dbReference type="Proteomes" id="UP000001362">
    <property type="component" value="Chromosome"/>
</dbReference>
<dbReference type="GO" id="GO:0022625">
    <property type="term" value="C:cytosolic large ribosomal subunit"/>
    <property type="evidence" value="ECO:0007669"/>
    <property type="project" value="TreeGrafter"/>
</dbReference>
<dbReference type="GO" id="GO:0008097">
    <property type="term" value="F:5S rRNA binding"/>
    <property type="evidence" value="ECO:0007669"/>
    <property type="project" value="TreeGrafter"/>
</dbReference>
<dbReference type="GO" id="GO:0003735">
    <property type="term" value="F:structural constituent of ribosome"/>
    <property type="evidence" value="ECO:0007669"/>
    <property type="project" value="InterPro"/>
</dbReference>
<dbReference type="GO" id="GO:0006412">
    <property type="term" value="P:translation"/>
    <property type="evidence" value="ECO:0007669"/>
    <property type="project" value="UniProtKB-UniRule"/>
</dbReference>
<dbReference type="CDD" id="cd00432">
    <property type="entry name" value="Ribosomal_L18_L5e"/>
    <property type="match status" value="1"/>
</dbReference>
<dbReference type="FunFam" id="3.30.420.100:FF:000001">
    <property type="entry name" value="50S ribosomal protein L18"/>
    <property type="match status" value="1"/>
</dbReference>
<dbReference type="Gene3D" id="3.30.420.100">
    <property type="match status" value="1"/>
</dbReference>
<dbReference type="HAMAP" id="MF_01337_B">
    <property type="entry name" value="Ribosomal_uL18_B"/>
    <property type="match status" value="1"/>
</dbReference>
<dbReference type="InterPro" id="IPR004389">
    <property type="entry name" value="Ribosomal_uL18_bac-type"/>
</dbReference>
<dbReference type="InterPro" id="IPR005484">
    <property type="entry name" value="Ribosomal_uL18_bac/euk"/>
</dbReference>
<dbReference type="NCBIfam" id="TIGR00060">
    <property type="entry name" value="L18_bact"/>
    <property type="match status" value="1"/>
</dbReference>
<dbReference type="PANTHER" id="PTHR12899">
    <property type="entry name" value="39S RIBOSOMAL PROTEIN L18, MITOCHONDRIAL"/>
    <property type="match status" value="1"/>
</dbReference>
<dbReference type="PANTHER" id="PTHR12899:SF3">
    <property type="entry name" value="LARGE RIBOSOMAL SUBUNIT PROTEIN UL18M"/>
    <property type="match status" value="1"/>
</dbReference>
<dbReference type="Pfam" id="PF00861">
    <property type="entry name" value="Ribosomal_L18p"/>
    <property type="match status" value="1"/>
</dbReference>
<dbReference type="SUPFAM" id="SSF53137">
    <property type="entry name" value="Translational machinery components"/>
    <property type="match status" value="1"/>
</dbReference>